<protein>
    <recommendedName>
        <fullName>Indolepyruvate oxidoreductase subunit IorA</fullName>
        <shortName>IOR</shortName>
        <ecNumber>1.2.7.8</ecNumber>
    </recommendedName>
    <alternativeName>
        <fullName>Indolepyruvate ferredoxin oxidoreductase subunit alpha</fullName>
    </alternativeName>
</protein>
<reference key="1">
    <citation type="journal article" date="1997" name="Mol. Gen. Genet.">
        <title>Indolepyruvate ferredoxin oxidoreductase from Pyrococcus sp. KOD1 possesses a mosaic structure showing features of various oxidoreductases.</title>
        <authorList>
            <person name="Siddiqui M.A."/>
            <person name="Fujiwara S."/>
            <person name="Imanaka T."/>
        </authorList>
    </citation>
    <scope>NUCLEOTIDE SEQUENCE [GENOMIC DNA]</scope>
    <scope>PRESENCE OF A 3FE-4S AND TWO 4FE-4S CLUSTERS</scope>
    <source>
        <strain>ATCC BAA-918 / JCM 12380 / KOD1</strain>
    </source>
</reference>
<reference key="2">
    <citation type="journal article" date="2005" name="Genome Res.">
        <title>Complete genome sequence of the hyperthermophilic archaeon Thermococcus kodakaraensis KOD1 and comparison with Pyrococcus genomes.</title>
        <authorList>
            <person name="Fukui T."/>
            <person name="Atomi H."/>
            <person name="Kanai T."/>
            <person name="Matsumi R."/>
            <person name="Fujiwara S."/>
            <person name="Imanaka T."/>
        </authorList>
    </citation>
    <scope>NUCLEOTIDE SEQUENCE [LARGE SCALE GENOMIC DNA]</scope>
    <source>
        <strain>ATCC BAA-918 / JCM 12380 / KOD1</strain>
    </source>
</reference>
<gene>
    <name type="primary">iorA</name>
    <name type="ordered locus">TK0136</name>
</gene>
<evidence type="ECO:0000255" key="1">
    <source>
        <dbReference type="PROSITE-ProRule" id="PRU00711"/>
    </source>
</evidence>
<evidence type="ECO:0000303" key="2">
    <source>
    </source>
</evidence>
<evidence type="ECO:0000305" key="3"/>
<keyword id="KW-0004">4Fe-4S</keyword>
<keyword id="KW-0249">Electron transport</keyword>
<keyword id="KW-0408">Iron</keyword>
<keyword id="KW-0411">Iron-sulfur</keyword>
<keyword id="KW-0479">Metal-binding</keyword>
<keyword id="KW-0560">Oxidoreductase</keyword>
<keyword id="KW-1185">Reference proteome</keyword>
<keyword id="KW-0677">Repeat</keyword>
<keyword id="KW-0813">Transport</keyword>
<proteinExistence type="evidence at protein level"/>
<feature type="chain" id="PRO_0000099930" description="Indolepyruvate oxidoreductase subunit IorA">
    <location>
        <begin position="1"/>
        <end position="647"/>
    </location>
</feature>
<feature type="domain" description="4Fe-4S ferredoxin-type 1" evidence="1">
    <location>
        <begin position="585"/>
        <end position="614"/>
    </location>
</feature>
<feature type="domain" description="4Fe-4S ferredoxin-type 2" evidence="1">
    <location>
        <begin position="616"/>
        <end position="645"/>
    </location>
</feature>
<feature type="binding site" evidence="2">
    <location>
        <position position="594"/>
    </location>
    <ligand>
        <name>[4Fe-4S] cluster</name>
        <dbReference type="ChEBI" id="CHEBI:49883"/>
        <label>1</label>
    </ligand>
</feature>
<feature type="binding site" evidence="2">
    <location>
        <position position="597"/>
    </location>
    <ligand>
        <name>[4Fe-4S] cluster</name>
        <dbReference type="ChEBI" id="CHEBI:49883"/>
        <label>1</label>
    </ligand>
</feature>
<feature type="binding site" evidence="2">
    <location>
        <position position="600"/>
    </location>
    <ligand>
        <name>[4Fe-4S] cluster</name>
        <dbReference type="ChEBI" id="CHEBI:49883"/>
        <label>1</label>
    </ligand>
</feature>
<feature type="binding site" evidence="2">
    <location>
        <position position="606"/>
    </location>
    <ligand>
        <name>[4Fe-4S] cluster</name>
        <dbReference type="ChEBI" id="CHEBI:49883"/>
        <label>2</label>
    </ligand>
</feature>
<feature type="binding site" evidence="2">
    <location>
        <position position="625"/>
    </location>
    <ligand>
        <name>[4Fe-4S] cluster</name>
        <dbReference type="ChEBI" id="CHEBI:49883"/>
        <label>2</label>
    </ligand>
</feature>
<feature type="binding site" evidence="2">
    <location>
        <position position="628"/>
    </location>
    <ligand>
        <name>[4Fe-4S] cluster</name>
        <dbReference type="ChEBI" id="CHEBI:49883"/>
        <label>2</label>
    </ligand>
</feature>
<feature type="binding site" evidence="2">
    <location>
        <position position="631"/>
    </location>
    <ligand>
        <name>[4Fe-4S] cluster</name>
        <dbReference type="ChEBI" id="CHEBI:49883"/>
        <label>2</label>
    </ligand>
</feature>
<feature type="binding site" evidence="2">
    <location>
        <position position="635"/>
    </location>
    <ligand>
        <name>[4Fe-4S] cluster</name>
        <dbReference type="ChEBI" id="CHEBI:49883"/>
        <label>1</label>
    </ligand>
</feature>
<feature type="sequence conflict" description="In Ref. 1; BAA20528." evidence="3" ref="1">
    <original>A</original>
    <variation>E</variation>
    <location>
        <position position="26"/>
    </location>
</feature>
<feature type="sequence conflict" description="In Ref. 1; BAA20528." evidence="3" ref="1">
    <original>DTMAA</original>
    <variation>IRWQT</variation>
    <location>
        <begin position="50"/>
        <end position="54"/>
    </location>
</feature>
<feature type="sequence conflict" description="In Ref. 1; BAA20528." evidence="3" ref="1">
    <original>P</original>
    <variation>R</variation>
    <location>
        <position position="311"/>
    </location>
</feature>
<feature type="sequence conflict" description="In Ref. 1; BAA20528." evidence="3" ref="1">
    <original>NA</original>
    <variation>KT</variation>
    <location>
        <begin position="602"/>
        <end position="603"/>
    </location>
</feature>
<dbReference type="EC" id="1.2.7.8"/>
<dbReference type="EMBL" id="D86221">
    <property type="protein sequence ID" value="BAA20528.1"/>
    <property type="molecule type" value="Genomic_DNA"/>
</dbReference>
<dbReference type="EMBL" id="AP006878">
    <property type="protein sequence ID" value="BAD84325.1"/>
    <property type="molecule type" value="Genomic_DNA"/>
</dbReference>
<dbReference type="RefSeq" id="WP_011249091.1">
    <property type="nucleotide sequence ID" value="NC_006624.1"/>
</dbReference>
<dbReference type="STRING" id="69014.TK0136"/>
<dbReference type="EnsemblBacteria" id="BAD84325">
    <property type="protein sequence ID" value="BAD84325"/>
    <property type="gene ID" value="TK0136"/>
</dbReference>
<dbReference type="GeneID" id="78446641"/>
<dbReference type="KEGG" id="tko:TK0136"/>
<dbReference type="PATRIC" id="fig|69014.16.peg.136"/>
<dbReference type="eggNOG" id="arCOG01609">
    <property type="taxonomic scope" value="Archaea"/>
</dbReference>
<dbReference type="HOGENOM" id="CLU_017727_0_0_2"/>
<dbReference type="InParanoid" id="O07835"/>
<dbReference type="OrthoDB" id="15347at2157"/>
<dbReference type="PhylomeDB" id="O07835"/>
<dbReference type="BRENDA" id="1.2.7.8">
    <property type="organism ID" value="5246"/>
</dbReference>
<dbReference type="Proteomes" id="UP000000536">
    <property type="component" value="Chromosome"/>
</dbReference>
<dbReference type="GO" id="GO:0051539">
    <property type="term" value="F:4 iron, 4 sulfur cluster binding"/>
    <property type="evidence" value="ECO:0007669"/>
    <property type="project" value="UniProtKB-KW"/>
</dbReference>
<dbReference type="GO" id="GO:0043805">
    <property type="term" value="F:indolepyruvate ferredoxin oxidoreductase activity"/>
    <property type="evidence" value="ECO:0007669"/>
    <property type="project" value="UniProtKB-EC"/>
</dbReference>
<dbReference type="GO" id="GO:0046872">
    <property type="term" value="F:metal ion binding"/>
    <property type="evidence" value="ECO:0007669"/>
    <property type="project" value="UniProtKB-KW"/>
</dbReference>
<dbReference type="GO" id="GO:0030976">
    <property type="term" value="F:thiamine pyrophosphate binding"/>
    <property type="evidence" value="ECO:0007669"/>
    <property type="project" value="InterPro"/>
</dbReference>
<dbReference type="GO" id="GO:0006082">
    <property type="term" value="P:organic acid metabolic process"/>
    <property type="evidence" value="ECO:0007669"/>
    <property type="project" value="UniProtKB-ARBA"/>
</dbReference>
<dbReference type="GO" id="GO:0044272">
    <property type="term" value="P:sulfur compound biosynthetic process"/>
    <property type="evidence" value="ECO:0007669"/>
    <property type="project" value="UniProtKB-ARBA"/>
</dbReference>
<dbReference type="CDD" id="cd02008">
    <property type="entry name" value="TPP_IOR_alpha"/>
    <property type="match status" value="1"/>
</dbReference>
<dbReference type="CDD" id="cd07034">
    <property type="entry name" value="TPP_PYR_PFOR_IOR-alpha_like"/>
    <property type="match status" value="1"/>
</dbReference>
<dbReference type="FunFam" id="3.30.70.20:FF:000089">
    <property type="entry name" value="Indolepyruvate oxidoreductase subunit IorA"/>
    <property type="match status" value="1"/>
</dbReference>
<dbReference type="FunFam" id="3.40.50.970:FF:000039">
    <property type="entry name" value="Indolepyruvate oxidoreductase subunit IorA"/>
    <property type="match status" value="1"/>
</dbReference>
<dbReference type="FunFam" id="3.40.50.970:FF:000116">
    <property type="entry name" value="Indolepyruvate oxidoreductase subunit IorA"/>
    <property type="match status" value="1"/>
</dbReference>
<dbReference type="Gene3D" id="3.30.70.20">
    <property type="match status" value="1"/>
</dbReference>
<dbReference type="Gene3D" id="3.40.50.970">
    <property type="match status" value="2"/>
</dbReference>
<dbReference type="InterPro" id="IPR017896">
    <property type="entry name" value="4Fe4S_Fe-S-bd"/>
</dbReference>
<dbReference type="InterPro" id="IPR017900">
    <property type="entry name" value="4Fe4S_Fe_S_CS"/>
</dbReference>
<dbReference type="InterPro" id="IPR045025">
    <property type="entry name" value="HACL1-like"/>
</dbReference>
<dbReference type="InterPro" id="IPR017721">
    <property type="entry name" value="IorA"/>
</dbReference>
<dbReference type="InterPro" id="IPR002880">
    <property type="entry name" value="Pyrv_Fd/Flavodoxin_OxRdtase_N"/>
</dbReference>
<dbReference type="InterPro" id="IPR029061">
    <property type="entry name" value="THDP-binding"/>
</dbReference>
<dbReference type="InterPro" id="IPR011766">
    <property type="entry name" value="TPP_enzyme_TPP-bd"/>
</dbReference>
<dbReference type="InterPro" id="IPR009014">
    <property type="entry name" value="Transketo_C/PFOR_II"/>
</dbReference>
<dbReference type="NCBIfam" id="TIGR03336">
    <property type="entry name" value="IOR_alpha"/>
    <property type="match status" value="1"/>
</dbReference>
<dbReference type="PANTHER" id="PTHR43710">
    <property type="entry name" value="2-HYDROXYACYL-COA LYASE"/>
    <property type="match status" value="1"/>
</dbReference>
<dbReference type="PANTHER" id="PTHR43710:SF7">
    <property type="entry name" value="INDOLEPYRUVATE OXIDOREDUCTASE SUBUNIT IORA"/>
    <property type="match status" value="1"/>
</dbReference>
<dbReference type="Pfam" id="PF12838">
    <property type="entry name" value="Fer4_7"/>
    <property type="match status" value="1"/>
</dbReference>
<dbReference type="Pfam" id="PF01855">
    <property type="entry name" value="POR_N"/>
    <property type="match status" value="1"/>
</dbReference>
<dbReference type="Pfam" id="PF02775">
    <property type="entry name" value="TPP_enzyme_C"/>
    <property type="match status" value="1"/>
</dbReference>
<dbReference type="PIRSF" id="PIRSF006439">
    <property type="entry name" value="Indolepyruvate_ferr_oxidored"/>
    <property type="match status" value="1"/>
</dbReference>
<dbReference type="SUPFAM" id="SSF54862">
    <property type="entry name" value="4Fe-4S ferredoxins"/>
    <property type="match status" value="1"/>
</dbReference>
<dbReference type="SUPFAM" id="SSF52518">
    <property type="entry name" value="Thiamin diphosphate-binding fold (THDP-binding)"/>
    <property type="match status" value="2"/>
</dbReference>
<dbReference type="SUPFAM" id="SSF52922">
    <property type="entry name" value="TK C-terminal domain-like"/>
    <property type="match status" value="1"/>
</dbReference>
<dbReference type="PROSITE" id="PS00198">
    <property type="entry name" value="4FE4S_FER_1"/>
    <property type="match status" value="1"/>
</dbReference>
<dbReference type="PROSITE" id="PS51379">
    <property type="entry name" value="4FE4S_FER_2"/>
    <property type="match status" value="2"/>
</dbReference>
<sequence length="647" mass="70900">MAKVTDIVLWDKPGERVLLLGNHAIARGALEANIAVFAAYPGTPSSELTDTMAAVAKKAGVYMEYSTNEKVAFETALAAAWSGLRAMTAMKHVGLNVAADSFLSSVGMGVEGGFVIMVADDPSMWSSQNEQDTRVYAKFANVPVLEPSSPHEAKEMTKYAFELSEKFKHFVILRTTTRSSHARGDVVLGELPEEIKTGKRKFGKFKKDPTRFVDVPAHARKFHPLILEKIEKIREELNNCPFNWIEGKEDAKVGIIAPGLSYAYVKEALAWLGVEDVKILKLGTPFPVPYGLLGKFFDGLEKVLIVEELEPVVEEQVKTWAYDKGLRIPIHGKDLVPRVYEMTTRRAVEAIAKFLGLETPINFAEIDEKYEKVSQIVPPRPPSLCPACPHRNSFFAIRKAAGPKAIYPSDIGCYTLGVLPPLRTVDTTVAMGASIGIGHGLSIAMNGSLAEEEHKEGKEKQIIVATIGDSTFYHTGLPALANAIYNRSNVLIVVLDNLVTAMTGDQPNPGTGQTPHGMGKRIPIEDVAKAMGADFVAVVDPYDIKATYETIKKALEVEGVSVVVSRQVCALYKIGQMRRRGMKWPIYHVVEDKCTGCKICINAYGCPAIYWDPETKKAKVDPTMCWGCGGCAQVCPFDAFEPMKEGE</sequence>
<comment type="function">
    <text>Catalyzes the ferredoxin-dependent oxidative decarboxylation of arylpyruvates.</text>
</comment>
<comment type="catalytic activity">
    <reaction>
        <text>indole-3-pyruvate + 2 oxidized [2Fe-2S]-[ferredoxin] + CoA = (indol-3-yl)acetyl-CoA + 2 reduced [2Fe-2S]-[ferredoxin] + CO2 + H(+)</text>
        <dbReference type="Rhea" id="RHEA:12645"/>
        <dbReference type="Rhea" id="RHEA-COMP:10000"/>
        <dbReference type="Rhea" id="RHEA-COMP:10001"/>
        <dbReference type="ChEBI" id="CHEBI:15378"/>
        <dbReference type="ChEBI" id="CHEBI:16526"/>
        <dbReference type="ChEBI" id="CHEBI:17640"/>
        <dbReference type="ChEBI" id="CHEBI:33737"/>
        <dbReference type="ChEBI" id="CHEBI:33738"/>
        <dbReference type="ChEBI" id="CHEBI:57271"/>
        <dbReference type="ChEBI" id="CHEBI:57287"/>
        <dbReference type="EC" id="1.2.7.8"/>
    </reaction>
</comment>
<comment type="cofactor">
    <cofactor evidence="2">
        <name>[4Fe-4S] cluster</name>
        <dbReference type="ChEBI" id="CHEBI:49883"/>
    </cofactor>
    <text evidence="2">Binds 2 [4Fe-4S] clusters. In this family the first cluster has a non-standard and varying [4Fe-4S] binding motif CX(2)CX(2)CX(4-5)CP.</text>
</comment>
<comment type="biophysicochemical properties">
    <temperatureDependence>
        <text>Optimum temperature is 70 degrees Celsius.</text>
    </temperatureDependence>
</comment>
<comment type="subunit">
    <text>Heterodimer of the IorA and IorB subunits.</text>
</comment>
<organism>
    <name type="scientific">Thermococcus kodakarensis (strain ATCC BAA-918 / JCM 12380 / KOD1)</name>
    <name type="common">Pyrococcus kodakaraensis (strain KOD1)</name>
    <dbReference type="NCBI Taxonomy" id="69014"/>
    <lineage>
        <taxon>Archaea</taxon>
        <taxon>Methanobacteriati</taxon>
        <taxon>Methanobacteriota</taxon>
        <taxon>Thermococci</taxon>
        <taxon>Thermococcales</taxon>
        <taxon>Thermococcaceae</taxon>
        <taxon>Thermococcus</taxon>
    </lineage>
</organism>
<accession>O07835</accession>
<accession>Q5JFI0</accession>
<name>IORA_THEKO</name>